<accession>C0HLU8</accession>
<dbReference type="SMR" id="C0HLU8"/>
<dbReference type="GO" id="GO:0005576">
    <property type="term" value="C:extracellular region"/>
    <property type="evidence" value="ECO:0007669"/>
    <property type="project" value="UniProtKB-SubCell"/>
</dbReference>
<dbReference type="GO" id="GO:0046872">
    <property type="term" value="F:metal ion binding"/>
    <property type="evidence" value="ECO:0007669"/>
    <property type="project" value="UniProtKB-KW"/>
</dbReference>
<dbReference type="GO" id="GO:0016491">
    <property type="term" value="F:oxidoreductase activity"/>
    <property type="evidence" value="ECO:0007669"/>
    <property type="project" value="InterPro"/>
</dbReference>
<dbReference type="GO" id="GO:0005344">
    <property type="term" value="F:oxygen carrier activity"/>
    <property type="evidence" value="ECO:0007669"/>
    <property type="project" value="UniProtKB-KW"/>
</dbReference>
<dbReference type="Gene3D" id="1.10.1280.10">
    <property type="entry name" value="Di-copper center containing domain from catechol oxidase"/>
    <property type="match status" value="1"/>
</dbReference>
<dbReference type="Gene3D" id="2.60.40.1520">
    <property type="entry name" value="Hemocyanin, C-terminal domain"/>
    <property type="match status" value="1"/>
</dbReference>
<dbReference type="Gene3D" id="1.20.1370.10">
    <property type="entry name" value="Hemocyanin, N-terminal domain"/>
    <property type="match status" value="1"/>
</dbReference>
<dbReference type="InterPro" id="IPR008922">
    <property type="entry name" value="Di-copper_centre_dom_sf"/>
</dbReference>
<dbReference type="InterPro" id="IPR013788">
    <property type="entry name" value="Hemocyanin/hexamerin"/>
</dbReference>
<dbReference type="InterPro" id="IPR000896">
    <property type="entry name" value="Hemocyanin/hexamerin_mid_dom"/>
</dbReference>
<dbReference type="InterPro" id="IPR005203">
    <property type="entry name" value="Hemocyanin_C"/>
</dbReference>
<dbReference type="InterPro" id="IPR037020">
    <property type="entry name" value="Hemocyanin_C_sf"/>
</dbReference>
<dbReference type="InterPro" id="IPR005204">
    <property type="entry name" value="Hemocyanin_N"/>
</dbReference>
<dbReference type="InterPro" id="IPR036697">
    <property type="entry name" value="Hemocyanin_N_sf"/>
</dbReference>
<dbReference type="InterPro" id="IPR014756">
    <property type="entry name" value="Ig_E-set"/>
</dbReference>
<dbReference type="InterPro" id="IPR002227">
    <property type="entry name" value="Tyrosinase_Cu-bd"/>
</dbReference>
<dbReference type="PANTHER" id="PTHR11511:SF5">
    <property type="entry name" value="FAT-BODY PROTEIN 1-RELATED"/>
    <property type="match status" value="1"/>
</dbReference>
<dbReference type="PANTHER" id="PTHR11511">
    <property type="entry name" value="LARVAL STORAGE PROTEIN/PHENOLOXIDASE"/>
    <property type="match status" value="1"/>
</dbReference>
<dbReference type="Pfam" id="PF03723">
    <property type="entry name" value="Hemocyanin_C"/>
    <property type="match status" value="1"/>
</dbReference>
<dbReference type="Pfam" id="PF00372">
    <property type="entry name" value="Hemocyanin_M"/>
    <property type="match status" value="1"/>
</dbReference>
<dbReference type="Pfam" id="PF03722">
    <property type="entry name" value="Hemocyanin_N"/>
    <property type="match status" value="1"/>
</dbReference>
<dbReference type="PRINTS" id="PR00187">
    <property type="entry name" value="HAEMOCYANIN"/>
</dbReference>
<dbReference type="SUPFAM" id="SSF48056">
    <property type="entry name" value="Di-copper centre-containing domain"/>
    <property type="match status" value="1"/>
</dbReference>
<dbReference type="SUPFAM" id="SSF81296">
    <property type="entry name" value="E set domains"/>
    <property type="match status" value="1"/>
</dbReference>
<dbReference type="SUPFAM" id="SSF48050">
    <property type="entry name" value="Hemocyanin, N-terminal domain"/>
    <property type="match status" value="1"/>
</dbReference>
<dbReference type="PROSITE" id="PS00209">
    <property type="entry name" value="HEMOCYANIN_1"/>
    <property type="match status" value="1"/>
</dbReference>
<dbReference type="PROSITE" id="PS00210">
    <property type="entry name" value="HEMOCYANIN_2"/>
    <property type="match status" value="1"/>
</dbReference>
<dbReference type="PROSITE" id="PS00498">
    <property type="entry name" value="TYROSINASE_2"/>
    <property type="match status" value="1"/>
</dbReference>
<feature type="chain" id="PRO_0000453529" description="Hemocyanin subunit">
    <location>
        <begin position="1"/>
        <end position="650"/>
    </location>
</feature>
<feature type="binding site" evidence="1">
    <location>
        <position position="193"/>
    </location>
    <ligand>
        <name>Cu cation</name>
        <dbReference type="ChEBI" id="CHEBI:23378"/>
        <label>A</label>
    </ligand>
</feature>
<feature type="binding site" evidence="1">
    <location>
        <position position="197"/>
    </location>
    <ligand>
        <name>Cu cation</name>
        <dbReference type="ChEBI" id="CHEBI:23378"/>
        <label>A</label>
    </ligand>
</feature>
<feature type="binding site" evidence="1">
    <location>
        <position position="225"/>
    </location>
    <ligand>
        <name>Cu cation</name>
        <dbReference type="ChEBI" id="CHEBI:23378"/>
        <label>A</label>
    </ligand>
</feature>
<feature type="binding site" evidence="1">
    <location>
        <position position="344"/>
    </location>
    <ligand>
        <name>Cu cation</name>
        <dbReference type="ChEBI" id="CHEBI:23378"/>
        <label>B</label>
    </ligand>
</feature>
<feature type="binding site" evidence="1">
    <location>
        <position position="348"/>
    </location>
    <ligand>
        <name>Cu cation</name>
        <dbReference type="ChEBI" id="CHEBI:23378"/>
        <label>B</label>
    </ligand>
</feature>
<feature type="binding site" evidence="1">
    <location>
        <position position="384"/>
    </location>
    <ligand>
        <name>Cu cation</name>
        <dbReference type="ChEBI" id="CHEBI:23378"/>
        <label>B</label>
    </ligand>
</feature>
<feature type="glycosylation site" description="O-linked (GalNAc...) serine" evidence="2">
    <location>
        <position position="120"/>
    </location>
</feature>
<feature type="glycosylation site" description="O-linked (GalNAc...) serine" evidence="2">
    <location>
        <position position="172"/>
    </location>
</feature>
<feature type="glycosylation site" description="N-linked (GlcNAc...) asparagine" evidence="3">
    <location>
        <position position="309"/>
    </location>
</feature>
<evidence type="ECO:0000250" key="1">
    <source>
        <dbReference type="UniProtKB" id="P04254"/>
    </source>
</evidence>
<evidence type="ECO:0000250" key="2">
    <source>
        <dbReference type="UniProtKB" id="P84293"/>
    </source>
</evidence>
<evidence type="ECO:0000255" key="3">
    <source>
        <dbReference type="PROSITE-ProRule" id="PRU00498"/>
    </source>
</evidence>
<evidence type="ECO:0000269" key="4">
    <source ref="1"/>
</evidence>
<evidence type="ECO:0000303" key="5">
    <source ref="1"/>
</evidence>
<evidence type="ECO:0000305" key="6"/>
<comment type="function">
    <text evidence="2">Hemocyanins are copper-containing oxygen carriers occurring freely dissolved in the hemolymph of many mollusks and arthropods.</text>
</comment>
<comment type="subunit">
    <text evidence="2">Hexamer of a number of different chains.</text>
</comment>
<comment type="subcellular location">
    <subcellularLocation>
        <location evidence="4">Secreted</location>
        <location evidence="4">Extracellular space</location>
    </subcellularLocation>
</comment>
<comment type="tissue specificity">
    <text evidence="4">Hemolymph.</text>
</comment>
<comment type="PTM">
    <text evidence="2">Contains one N-glycosylated and three O-glycosylated residues. The position of one of the O-glycosylated residues has not been determined.</text>
</comment>
<comment type="PTM">
    <text evidence="2">O-linked glycan at Ser-120 may be composed of two GalNAc, three Gal, and two N-acetylneuraminic acid units for a total 1525-Da MW.</text>
</comment>
<comment type="similarity">
    <text evidence="6">Belongs to the tyrosinase family. Hemocyanin subfamily.</text>
</comment>
<name>HCY_SCYSE</name>
<proteinExistence type="evidence at protein level"/>
<keyword id="KW-0186">Copper</keyword>
<keyword id="KW-0903">Direct protein sequencing</keyword>
<keyword id="KW-0325">Glycoprotein</keyword>
<keyword id="KW-0479">Metal-binding</keyword>
<keyword id="KW-0561">Oxygen transport</keyword>
<keyword id="KW-0964">Secreted</keyword>
<keyword id="KW-0813">Transport</keyword>
<organism evidence="5">
    <name type="scientific">Scylla serrata</name>
    <name type="common">Mud crab</name>
    <dbReference type="NCBI Taxonomy" id="6761"/>
    <lineage>
        <taxon>Eukaryota</taxon>
        <taxon>Metazoa</taxon>
        <taxon>Ecdysozoa</taxon>
        <taxon>Arthropoda</taxon>
        <taxon>Crustacea</taxon>
        <taxon>Multicrustacea</taxon>
        <taxon>Malacostraca</taxon>
        <taxon>Eumalacostraca</taxon>
        <taxon>Eucarida</taxon>
        <taxon>Decapoda</taxon>
        <taxon>Pleocyemata</taxon>
        <taxon>Brachyura</taxon>
        <taxon>Eubrachyura</taxon>
        <taxon>Portunoidea</taxon>
        <taxon>Portunidae</taxon>
        <taxon>Portuninae</taxon>
        <taxon>Scylla</taxon>
    </lineage>
</organism>
<reference evidence="6" key="1">
    <citation type="submission" date="2020-12" db="UniProtKB">
        <title>Characterization and molecular interactions of hemolymph proteins from two mud crab species Scylla serrata (Forskal, 1775) and Scylla olivacea (Herbst, 1796) from Visakhapatnam coast, Andhra Pradesh, India.</title>
        <authorList>
            <person name="Prasanthi C."/>
            <person name="Ramesh B.K."/>
        </authorList>
    </citation>
    <scope>PROTEIN SEQUENCE</scope>
    <scope>IDENTIFICATION BY MASS SPECTROMETRY</scope>
    <scope>SUBCELLULAR LOCATION</scope>
    <scope>TISSUE SPECIFICITY</scope>
    <source>
        <tissue evidence="4">Hemolymph</tissue>
    </source>
</reference>
<protein>
    <recommendedName>
        <fullName evidence="5">Hemocyanin subunit</fullName>
    </recommendedName>
</protein>
<sequence>DSPGGASDAQKTFDVNSLMPVKYEEIRDPHLKELSLSFDPLSGHYDDDGVSAKRLMKELNEHRLLQQSHWFSLFNPRTREEDLMLYNVDEHSGNWDTFAGNAAFFRVHVNEGFFVYASYSVVIHSKLTQHVVLPPLYEVTPHLFTNSEVIQKAYAAKMTQTPTKIFAHFTGSKSNPEQRVAYFGEDIGMNTHHVTWHLEFPFWWDDAHYDHHIERKGESCSSWVHHQLTVRFDAERLSNYLDPVRELHWDDVIHEGFAPHTSYKYGGYFPDRPDNVNFEDVDGVARVRDMLLFEERIQDAIAHGYLRYNGSTINIRDNHGIDVLGDVFESSMYSPRQDYYGALHNQAHRVLGSQADPHGKFALPPGVLEHFETATRDPAFFRLHKYMDNIFRKHKDSLTPYTKNELKFEGVNIDSIYEKGNLETYFESFMYTGVNIMLLTNDVDDVDIATYITDLAHKELSFQEDVTNEGDIGVLETVRIFAWPHIDDDHVEFSFNEGRWDVIEMDKFWVMLEHGHHSIDRSSFDSTVTIPDRPSFHDIEDRTSEAIPHGKELHIEEFESVTGLPNRFLIPKGLVKGKDMDVMVAVTSGEGLAAVEGLHRSANFAHHGCPEVRYPDKRPHGYPLYRPVDDERIITGVTNFKHIQVKVFHH</sequence>